<dbReference type="EMBL" id="AM942444">
    <property type="protein sequence ID" value="CAQ04280.1"/>
    <property type="molecule type" value="Genomic_DNA"/>
</dbReference>
<dbReference type="RefSeq" id="WP_012359580.1">
    <property type="nucleotide sequence ID" value="NC_010545.1"/>
</dbReference>
<dbReference type="SMR" id="B1VEU1"/>
<dbReference type="STRING" id="504474.cu0320"/>
<dbReference type="GeneID" id="60605123"/>
<dbReference type="KEGG" id="cur:cu0320"/>
<dbReference type="eggNOG" id="COG0091">
    <property type="taxonomic scope" value="Bacteria"/>
</dbReference>
<dbReference type="HOGENOM" id="CLU_083987_3_2_11"/>
<dbReference type="Proteomes" id="UP000001727">
    <property type="component" value="Chromosome"/>
</dbReference>
<dbReference type="GO" id="GO:0022625">
    <property type="term" value="C:cytosolic large ribosomal subunit"/>
    <property type="evidence" value="ECO:0007669"/>
    <property type="project" value="TreeGrafter"/>
</dbReference>
<dbReference type="GO" id="GO:0019843">
    <property type="term" value="F:rRNA binding"/>
    <property type="evidence" value="ECO:0007669"/>
    <property type="project" value="UniProtKB-UniRule"/>
</dbReference>
<dbReference type="GO" id="GO:0003735">
    <property type="term" value="F:structural constituent of ribosome"/>
    <property type="evidence" value="ECO:0007669"/>
    <property type="project" value="InterPro"/>
</dbReference>
<dbReference type="GO" id="GO:0006412">
    <property type="term" value="P:translation"/>
    <property type="evidence" value="ECO:0007669"/>
    <property type="project" value="UniProtKB-UniRule"/>
</dbReference>
<dbReference type="CDD" id="cd00336">
    <property type="entry name" value="Ribosomal_L22"/>
    <property type="match status" value="1"/>
</dbReference>
<dbReference type="FunFam" id="3.90.470.10:FF:000002">
    <property type="entry name" value="50S ribosomal protein L22"/>
    <property type="match status" value="1"/>
</dbReference>
<dbReference type="Gene3D" id="3.90.470.10">
    <property type="entry name" value="Ribosomal protein L22/L17"/>
    <property type="match status" value="1"/>
</dbReference>
<dbReference type="HAMAP" id="MF_01331_B">
    <property type="entry name" value="Ribosomal_uL22_B"/>
    <property type="match status" value="1"/>
</dbReference>
<dbReference type="InterPro" id="IPR001063">
    <property type="entry name" value="Ribosomal_uL22"/>
</dbReference>
<dbReference type="InterPro" id="IPR005727">
    <property type="entry name" value="Ribosomal_uL22_bac/chlpt-type"/>
</dbReference>
<dbReference type="InterPro" id="IPR047867">
    <property type="entry name" value="Ribosomal_uL22_bac/org-type"/>
</dbReference>
<dbReference type="InterPro" id="IPR018260">
    <property type="entry name" value="Ribosomal_uL22_CS"/>
</dbReference>
<dbReference type="InterPro" id="IPR036394">
    <property type="entry name" value="Ribosomal_uL22_sf"/>
</dbReference>
<dbReference type="NCBIfam" id="TIGR01044">
    <property type="entry name" value="rplV_bact"/>
    <property type="match status" value="1"/>
</dbReference>
<dbReference type="PANTHER" id="PTHR13501">
    <property type="entry name" value="CHLOROPLAST 50S RIBOSOMAL PROTEIN L22-RELATED"/>
    <property type="match status" value="1"/>
</dbReference>
<dbReference type="PANTHER" id="PTHR13501:SF8">
    <property type="entry name" value="LARGE RIBOSOMAL SUBUNIT PROTEIN UL22M"/>
    <property type="match status" value="1"/>
</dbReference>
<dbReference type="Pfam" id="PF00237">
    <property type="entry name" value="Ribosomal_L22"/>
    <property type="match status" value="1"/>
</dbReference>
<dbReference type="SUPFAM" id="SSF54843">
    <property type="entry name" value="Ribosomal protein L22"/>
    <property type="match status" value="1"/>
</dbReference>
<dbReference type="PROSITE" id="PS00464">
    <property type="entry name" value="RIBOSOMAL_L22"/>
    <property type="match status" value="1"/>
</dbReference>
<organism>
    <name type="scientific">Corynebacterium urealyticum (strain ATCC 43042 / DSM 7109)</name>
    <dbReference type="NCBI Taxonomy" id="504474"/>
    <lineage>
        <taxon>Bacteria</taxon>
        <taxon>Bacillati</taxon>
        <taxon>Actinomycetota</taxon>
        <taxon>Actinomycetes</taxon>
        <taxon>Mycobacteriales</taxon>
        <taxon>Corynebacteriaceae</taxon>
        <taxon>Corynebacterium</taxon>
    </lineage>
</organism>
<keyword id="KW-1185">Reference proteome</keyword>
<keyword id="KW-0687">Ribonucleoprotein</keyword>
<keyword id="KW-0689">Ribosomal protein</keyword>
<keyword id="KW-0694">RNA-binding</keyword>
<keyword id="KW-0699">rRNA-binding</keyword>
<reference key="1">
    <citation type="journal article" date="2008" name="J. Biotechnol.">
        <title>The lifestyle of Corynebacterium urealyticum derived from its complete genome sequence established by pyrosequencing.</title>
        <authorList>
            <person name="Tauch A."/>
            <person name="Trost E."/>
            <person name="Tilker A."/>
            <person name="Ludewig U."/>
            <person name="Schneiker S."/>
            <person name="Goesmann A."/>
            <person name="Arnold W."/>
            <person name="Bekel T."/>
            <person name="Brinkrolf K."/>
            <person name="Brune I."/>
            <person name="Goetker S."/>
            <person name="Kalinowski J."/>
            <person name="Kamp P.-B."/>
            <person name="Lobo F.P."/>
            <person name="Viehoever P."/>
            <person name="Weisshaar B."/>
            <person name="Soriano F."/>
            <person name="Droege M."/>
            <person name="Puehler A."/>
        </authorList>
    </citation>
    <scope>NUCLEOTIDE SEQUENCE [LARGE SCALE GENOMIC DNA]</scope>
    <source>
        <strain>ATCC 43042 / DSM 7109</strain>
    </source>
</reference>
<protein>
    <recommendedName>
        <fullName evidence="1">Large ribosomal subunit protein uL22</fullName>
    </recommendedName>
    <alternativeName>
        <fullName evidence="2">50S ribosomal protein L22</fullName>
    </alternativeName>
</protein>
<comment type="function">
    <text evidence="1">This protein binds specifically to 23S rRNA; its binding is stimulated by other ribosomal proteins, e.g. L4, L17, and L20. It is important during the early stages of 50S assembly. It makes multiple contacts with different domains of the 23S rRNA in the assembled 50S subunit and ribosome (By similarity).</text>
</comment>
<comment type="function">
    <text evidence="1">The globular domain of the protein is located near the polypeptide exit tunnel on the outside of the subunit, while an extended beta-hairpin is found that lines the wall of the exit tunnel in the center of the 70S ribosome.</text>
</comment>
<comment type="subunit">
    <text evidence="1">Part of the 50S ribosomal subunit.</text>
</comment>
<comment type="similarity">
    <text evidence="1">Belongs to the universal ribosomal protein uL22 family.</text>
</comment>
<gene>
    <name evidence="1" type="primary">rplV</name>
    <name type="ordered locus">cu0320</name>
</gene>
<sequence>MTETVNSARATARFVRVSPMKARRVIDLVRGKSVEDALAILKYAPQAASEDVAKVVASAAANAENNFGLDPRTLVISEAYADEGPTMRRFRPRAQGRAFHIRKRSSHITVVVESQKGSAQ</sequence>
<feature type="chain" id="PRO_1000142246" description="Large ribosomal subunit protein uL22">
    <location>
        <begin position="1"/>
        <end position="120"/>
    </location>
</feature>
<name>RL22_CORU7</name>
<evidence type="ECO:0000255" key="1">
    <source>
        <dbReference type="HAMAP-Rule" id="MF_01331"/>
    </source>
</evidence>
<evidence type="ECO:0000305" key="2"/>
<proteinExistence type="inferred from homology"/>
<accession>B1VEU1</accession>